<sequence length="107" mass="11043">MSTAELACSYAALILADDGIEISADKIQTLISAANVQEVEPIWASIFARALEGKDIKELLTNVGSAGPASAAPAGAAGAAAPAEEKAEEKEEEKEESDEDMGFGLFD</sequence>
<organism evidence="6">
    <name type="scientific">Penicillium crustosum</name>
    <name type="common">Blue mold fungus</name>
    <dbReference type="NCBI Taxonomy" id="36656"/>
    <lineage>
        <taxon>Eukaryota</taxon>
        <taxon>Fungi</taxon>
        <taxon>Dikarya</taxon>
        <taxon>Ascomycota</taxon>
        <taxon>Pezizomycotina</taxon>
        <taxon>Eurotiomycetes</taxon>
        <taxon>Eurotiomycetidae</taxon>
        <taxon>Eurotiales</taxon>
        <taxon>Aspergillaceae</taxon>
        <taxon>Penicillium</taxon>
    </lineage>
</organism>
<feature type="chain" id="PRO_0000447995" description="Large ribosomal subunit protein P1">
    <location>
        <begin position="1"/>
        <end position="107"/>
    </location>
</feature>
<feature type="region of interest" description="Disordered" evidence="2">
    <location>
        <begin position="67"/>
        <end position="107"/>
    </location>
</feature>
<feature type="compositionally biased region" description="Low complexity" evidence="2">
    <location>
        <begin position="67"/>
        <end position="82"/>
    </location>
</feature>
<feature type="compositionally biased region" description="Acidic residues" evidence="2">
    <location>
        <begin position="90"/>
        <end position="101"/>
    </location>
</feature>
<dbReference type="EMBL" id="JN791438">
    <property type="protein sequence ID" value="AEX34122.1"/>
    <property type="molecule type" value="mRNA"/>
</dbReference>
<dbReference type="SMR" id="H2E5X2"/>
<dbReference type="Allergome" id="10033">
    <property type="allergen name" value="Pen cr 26"/>
</dbReference>
<dbReference type="Allergome" id="10034">
    <property type="allergen name" value="Pen cr 26.0101"/>
</dbReference>
<dbReference type="GO" id="GO:0022625">
    <property type="term" value="C:cytosolic large ribosomal subunit"/>
    <property type="evidence" value="ECO:0000250"/>
    <property type="project" value="UniProtKB"/>
</dbReference>
<dbReference type="GO" id="GO:0030295">
    <property type="term" value="F:protein kinase activator activity"/>
    <property type="evidence" value="ECO:0007669"/>
    <property type="project" value="TreeGrafter"/>
</dbReference>
<dbReference type="GO" id="GO:0043021">
    <property type="term" value="F:ribonucleoprotein complex binding"/>
    <property type="evidence" value="ECO:0007669"/>
    <property type="project" value="TreeGrafter"/>
</dbReference>
<dbReference type="GO" id="GO:0003735">
    <property type="term" value="F:structural constituent of ribosome"/>
    <property type="evidence" value="ECO:0000250"/>
    <property type="project" value="UniProtKB"/>
</dbReference>
<dbReference type="GO" id="GO:0002181">
    <property type="term" value="P:cytoplasmic translation"/>
    <property type="evidence" value="ECO:0000250"/>
    <property type="project" value="UniProtKB"/>
</dbReference>
<dbReference type="GO" id="GO:0006414">
    <property type="term" value="P:translational elongation"/>
    <property type="evidence" value="ECO:0007669"/>
    <property type="project" value="InterPro"/>
</dbReference>
<dbReference type="CDD" id="cd05831">
    <property type="entry name" value="Ribosomal_P1"/>
    <property type="match status" value="1"/>
</dbReference>
<dbReference type="FunFam" id="1.10.10.1410:FF:000001">
    <property type="entry name" value="60S acidic ribosomal protein P1"/>
    <property type="match status" value="1"/>
</dbReference>
<dbReference type="Gene3D" id="1.10.10.1410">
    <property type="match status" value="1"/>
</dbReference>
<dbReference type="HAMAP" id="MF_01478">
    <property type="entry name" value="Ribosomal_L12_arch"/>
    <property type="match status" value="1"/>
</dbReference>
<dbReference type="InterPro" id="IPR038716">
    <property type="entry name" value="P1/P2_N_sf"/>
</dbReference>
<dbReference type="InterPro" id="IPR027534">
    <property type="entry name" value="Ribosomal_P1/P2"/>
</dbReference>
<dbReference type="PANTHER" id="PTHR45696">
    <property type="entry name" value="60S ACIDIC RIBOSOMAL PROTEIN P1"/>
    <property type="match status" value="1"/>
</dbReference>
<dbReference type="PANTHER" id="PTHR45696:SF10">
    <property type="entry name" value="LARGE RIBOSOMAL SUBUNIT PROTEIN P1"/>
    <property type="match status" value="1"/>
</dbReference>
<dbReference type="Pfam" id="PF00428">
    <property type="entry name" value="Ribosomal_60s"/>
    <property type="match status" value="1"/>
</dbReference>
<reference evidence="6" key="1">
    <citation type="journal article" date="2013" name="Med. Mycol.">
        <title>Isolation, expression and characterization of a minor allergen from Penicillium crustosum.</title>
        <authorList>
            <person name="Sevinc M.S."/>
            <person name="Kumar V."/>
            <person name="Abebe M."/>
            <person name="Lemieux M."/>
            <person name="Vijay H.M."/>
        </authorList>
    </citation>
    <scope>NUCLEOTIDE SEQUENCE [MRNA]</scope>
    <scope>ALLERGEN</scope>
    <source>
        <strain evidence="4 6">DAOM 231275</strain>
    </source>
</reference>
<evidence type="ECO:0000250" key="1">
    <source>
        <dbReference type="UniProtKB" id="P05318"/>
    </source>
</evidence>
<evidence type="ECO:0000256" key="2">
    <source>
        <dbReference type="SAM" id="MobiDB-lite"/>
    </source>
</evidence>
<evidence type="ECO:0000269" key="3">
    <source>
    </source>
</evidence>
<evidence type="ECO:0000303" key="4">
    <source>
    </source>
</evidence>
<evidence type="ECO:0000305" key="5"/>
<evidence type="ECO:0000312" key="6">
    <source>
        <dbReference type="EMBL" id="AEX34122.1"/>
    </source>
</evidence>
<comment type="function">
    <text evidence="5">Plays an important role in the elongation step of protein synthesis.</text>
</comment>
<comment type="subunit">
    <text evidence="5">P1 and P2 exist as dimers at the large ribosomal subunit.</text>
</comment>
<comment type="subcellular location">
    <subcellularLocation>
        <location evidence="1">Cytoplasm</location>
    </subcellularLocation>
</comment>
<comment type="allergen">
    <text evidence="3">Causes an allergic reaction in human. Binds to IgE in 23% of the 61 patients tested allergic to Penicillium mold.</text>
</comment>
<comment type="similarity">
    <text evidence="5">Belongs to the eukaryotic ribosomal protein P1/P2 family.</text>
</comment>
<name>RLA1_PENCR</name>
<proteinExistence type="evidence at protein level"/>
<keyword id="KW-0020">Allergen</keyword>
<keyword id="KW-0963">Cytoplasm</keyword>
<keyword id="KW-0687">Ribonucleoprotein</keyword>
<keyword id="KW-0689">Ribosomal protein</keyword>
<accession>H2E5X2</accession>
<protein>
    <recommendedName>
        <fullName evidence="5">Large ribosomal subunit protein P1</fullName>
    </recommendedName>
    <alternativeName>
        <fullName evidence="4">60S acidic ribosomal protein P1</fullName>
    </alternativeName>
    <allergenName evidence="5">Pen cr 26.0101</allergenName>
</protein>